<feature type="chain" id="PRO_0000200664" description="Protein Wnt-10a">
    <location>
        <begin position="1" status="less than"/>
        <end position="120" status="greater than"/>
    </location>
</feature>
<feature type="lipid moiety-binding region" description="O-palmitoleoyl serine; by PORCN" evidence="4">
    <location>
        <position position="1"/>
    </location>
</feature>
<feature type="glycosylation site" description="N-linked (GlcNAc...) asparagine" evidence="6">
    <location>
        <position position="29"/>
    </location>
</feature>
<feature type="glycosylation site" description="N-linked (GlcNAc...) asparagine" evidence="6">
    <location>
        <position position="87"/>
    </location>
</feature>
<feature type="disulfide bond" evidence="2">
    <location>
        <begin position="86"/>
        <end position="101"/>
    </location>
</feature>
<feature type="non-terminal residue">
    <location>
        <position position="1"/>
    </location>
</feature>
<feature type="non-terminal residue">
    <location>
        <position position="120"/>
    </location>
</feature>
<protein>
    <recommendedName>
        <fullName>Protein Wnt-10a</fullName>
    </recommendedName>
</protein>
<reference key="1">
    <citation type="journal article" date="1992" name="Proc. Natl. Acad. Sci. U.S.A.">
        <title>Diversification of the Wnt gene family on the ancestral lineage of vertebrates.</title>
        <authorList>
            <person name="Sidow A."/>
        </authorList>
    </citation>
    <scope>NUCLEOTIDE SEQUENCE [GENOMIC DNA]</scope>
</reference>
<accession>P28099</accession>
<proteinExistence type="inferred from homology"/>
<gene>
    <name type="primary">WNT-10A</name>
</gene>
<evidence type="ECO:0000250" key="1">
    <source>
        <dbReference type="UniProtKB" id="P27467"/>
    </source>
</evidence>
<evidence type="ECO:0000250" key="2">
    <source>
        <dbReference type="UniProtKB" id="P28026"/>
    </source>
</evidence>
<evidence type="ECO:0000250" key="3">
    <source>
        <dbReference type="UniProtKB" id="P43446"/>
    </source>
</evidence>
<evidence type="ECO:0000250" key="4">
    <source>
        <dbReference type="UniProtKB" id="P56704"/>
    </source>
</evidence>
<evidence type="ECO:0000250" key="5">
    <source>
        <dbReference type="UniProtKB" id="Q9GZT5"/>
    </source>
</evidence>
<evidence type="ECO:0000255" key="6"/>
<evidence type="ECO:0000305" key="7"/>
<comment type="function">
    <text evidence="3">Ligand for members of the frizzled family of seven transmembrane receptors. Required for normal tooth development. Regulates the expression of genes involved in tooth development.</text>
</comment>
<comment type="subcellular location">
    <subcellularLocation>
        <location evidence="5">Secreted</location>
        <location evidence="5">Extracellular space</location>
        <location evidence="5">Extracellular matrix</location>
    </subcellularLocation>
    <subcellularLocation>
        <location evidence="5">Secreted</location>
    </subcellularLocation>
</comment>
<comment type="PTM">
    <text evidence="1 4">Palmitoleoylation is required for efficient binding to frizzled receptors. Depalmitoleoylation leads to Wnt signaling pathway inhibition.</text>
</comment>
<comment type="similarity">
    <text evidence="7">Belongs to the Wnt family.</text>
</comment>
<sequence>SGSCQLKTCWQVTPDFRTVGTLLKHKFYNATLIKAHNRNTGQVEHAHHHPHRRKSSAGELVFFEESPNFCESEPKLDSAGTRGRICNKTSPGLDNCESLCCGRGHNILRQTRQERCNCKF</sequence>
<organism>
    <name type="scientific">Alopias vulpinus</name>
    <name type="common">Common thresher shark</name>
    <name type="synonym">Squalus vulpinus</name>
    <dbReference type="NCBI Taxonomy" id="7852"/>
    <lineage>
        <taxon>Eukaryota</taxon>
        <taxon>Metazoa</taxon>
        <taxon>Chordata</taxon>
        <taxon>Craniata</taxon>
        <taxon>Vertebrata</taxon>
        <taxon>Chondrichthyes</taxon>
        <taxon>Elasmobranchii</taxon>
        <taxon>Galeomorphii</taxon>
        <taxon>Galeoidea</taxon>
        <taxon>Lamniformes</taxon>
        <taxon>Alopiidae</taxon>
        <taxon>Alopias</taxon>
    </lineage>
</organism>
<dbReference type="EMBL" id="M91251">
    <property type="protein sequence ID" value="AAA48536.1"/>
    <property type="molecule type" value="Genomic_DNA"/>
</dbReference>
<dbReference type="SMR" id="P28099"/>
<dbReference type="GlyCosmos" id="P28099">
    <property type="glycosylation" value="2 sites, No reported glycans"/>
</dbReference>
<dbReference type="GO" id="GO:0005615">
    <property type="term" value="C:extracellular space"/>
    <property type="evidence" value="ECO:0007669"/>
    <property type="project" value="TreeGrafter"/>
</dbReference>
<dbReference type="GO" id="GO:0005125">
    <property type="term" value="F:cytokine activity"/>
    <property type="evidence" value="ECO:0007669"/>
    <property type="project" value="TreeGrafter"/>
</dbReference>
<dbReference type="GO" id="GO:0005109">
    <property type="term" value="F:frizzled binding"/>
    <property type="evidence" value="ECO:0007669"/>
    <property type="project" value="TreeGrafter"/>
</dbReference>
<dbReference type="GO" id="GO:0060070">
    <property type="term" value="P:canonical Wnt signaling pathway"/>
    <property type="evidence" value="ECO:0007669"/>
    <property type="project" value="TreeGrafter"/>
</dbReference>
<dbReference type="GO" id="GO:0045165">
    <property type="term" value="P:cell fate commitment"/>
    <property type="evidence" value="ECO:0007669"/>
    <property type="project" value="TreeGrafter"/>
</dbReference>
<dbReference type="GO" id="GO:0030182">
    <property type="term" value="P:neuron differentiation"/>
    <property type="evidence" value="ECO:0007669"/>
    <property type="project" value="TreeGrafter"/>
</dbReference>
<dbReference type="Gene3D" id="3.30.2460.20">
    <property type="match status" value="1"/>
</dbReference>
<dbReference type="InterPro" id="IPR005817">
    <property type="entry name" value="Wnt"/>
</dbReference>
<dbReference type="InterPro" id="IPR043158">
    <property type="entry name" value="Wnt_C"/>
</dbReference>
<dbReference type="PANTHER" id="PTHR12027:SF89">
    <property type="entry name" value="PROTEIN WNT-10A"/>
    <property type="match status" value="1"/>
</dbReference>
<dbReference type="PANTHER" id="PTHR12027">
    <property type="entry name" value="WNT RELATED"/>
    <property type="match status" value="1"/>
</dbReference>
<dbReference type="Pfam" id="PF00110">
    <property type="entry name" value="wnt"/>
    <property type="match status" value="1"/>
</dbReference>
<dbReference type="SMART" id="SM00097">
    <property type="entry name" value="WNT1"/>
    <property type="match status" value="1"/>
</dbReference>
<keyword id="KW-0217">Developmental protein</keyword>
<keyword id="KW-1015">Disulfide bond</keyword>
<keyword id="KW-0272">Extracellular matrix</keyword>
<keyword id="KW-0325">Glycoprotein</keyword>
<keyword id="KW-0449">Lipoprotein</keyword>
<keyword id="KW-0964">Secreted</keyword>
<keyword id="KW-0879">Wnt signaling pathway</keyword>
<name>WN10A_ALOVU</name>